<sequence length="182" mass="20049">MKQRLLFLGPPGAGKGTQAERLCAAHELMHLSTGDLLRTEVGAKTPLGQEAAAVMNRGELVSDELVLAIVENQLKNQNGGWLLDGFPRTLIQAKALEPLLEELKQPIEAVVLLELNDAVLIERLISRGRSDDNESVIRNRLEVYREKTAPLIDHYRQQGLLQTVEAHGSIESIAISIEKSLC</sequence>
<feature type="chain" id="PRO_0000158828" description="Adenylate kinase">
    <location>
        <begin position="1"/>
        <end position="182"/>
    </location>
</feature>
<feature type="region of interest" description="NMP" evidence="1">
    <location>
        <begin position="32"/>
        <end position="61"/>
    </location>
</feature>
<feature type="region of interest" description="LID" evidence="1">
    <location>
        <begin position="126"/>
        <end position="132"/>
    </location>
</feature>
<feature type="binding site" evidence="1">
    <location>
        <begin position="12"/>
        <end position="17"/>
    </location>
    <ligand>
        <name>ATP</name>
        <dbReference type="ChEBI" id="CHEBI:30616"/>
    </ligand>
</feature>
<feature type="binding site" evidence="1">
    <location>
        <position position="33"/>
    </location>
    <ligand>
        <name>AMP</name>
        <dbReference type="ChEBI" id="CHEBI:456215"/>
    </ligand>
</feature>
<feature type="binding site" evidence="1">
    <location>
        <position position="38"/>
    </location>
    <ligand>
        <name>AMP</name>
        <dbReference type="ChEBI" id="CHEBI:456215"/>
    </ligand>
</feature>
<feature type="binding site" evidence="1">
    <location>
        <begin position="59"/>
        <end position="61"/>
    </location>
    <ligand>
        <name>AMP</name>
        <dbReference type="ChEBI" id="CHEBI:456215"/>
    </ligand>
</feature>
<feature type="binding site" evidence="1">
    <location>
        <begin position="85"/>
        <end position="88"/>
    </location>
    <ligand>
        <name>AMP</name>
        <dbReference type="ChEBI" id="CHEBI:456215"/>
    </ligand>
</feature>
<feature type="binding site" evidence="1">
    <location>
        <position position="92"/>
    </location>
    <ligand>
        <name>AMP</name>
        <dbReference type="ChEBI" id="CHEBI:456215"/>
    </ligand>
</feature>
<feature type="binding site" evidence="1">
    <location>
        <position position="127"/>
    </location>
    <ligand>
        <name>ATP</name>
        <dbReference type="ChEBI" id="CHEBI:30616"/>
    </ligand>
</feature>
<feature type="binding site" evidence="1">
    <location>
        <position position="129"/>
    </location>
    <ligand>
        <name>AMP</name>
        <dbReference type="ChEBI" id="CHEBI:456215"/>
    </ligand>
</feature>
<feature type="binding site" evidence="1">
    <location>
        <position position="140"/>
    </location>
    <ligand>
        <name>AMP</name>
        <dbReference type="ChEBI" id="CHEBI:456215"/>
    </ligand>
</feature>
<feature type="binding site" evidence="1">
    <location>
        <position position="168"/>
    </location>
    <ligand>
        <name>ATP</name>
        <dbReference type="ChEBI" id="CHEBI:30616"/>
    </ligand>
</feature>
<dbReference type="EC" id="2.7.4.3" evidence="1"/>
<dbReference type="EMBL" id="BX548175">
    <property type="protein sequence ID" value="CAE21926.1"/>
    <property type="molecule type" value="Genomic_DNA"/>
</dbReference>
<dbReference type="RefSeq" id="WP_011131118.1">
    <property type="nucleotide sequence ID" value="NC_005071.1"/>
</dbReference>
<dbReference type="SMR" id="Q7V526"/>
<dbReference type="KEGG" id="pmt:PMT_1751"/>
<dbReference type="eggNOG" id="COG0563">
    <property type="taxonomic scope" value="Bacteria"/>
</dbReference>
<dbReference type="HOGENOM" id="CLU_032354_4_1_3"/>
<dbReference type="OrthoDB" id="9805030at2"/>
<dbReference type="UniPathway" id="UPA00588">
    <property type="reaction ID" value="UER00649"/>
</dbReference>
<dbReference type="Proteomes" id="UP000001423">
    <property type="component" value="Chromosome"/>
</dbReference>
<dbReference type="GO" id="GO:0005737">
    <property type="term" value="C:cytoplasm"/>
    <property type="evidence" value="ECO:0007669"/>
    <property type="project" value="UniProtKB-SubCell"/>
</dbReference>
<dbReference type="GO" id="GO:0004017">
    <property type="term" value="F:adenylate kinase activity"/>
    <property type="evidence" value="ECO:0007669"/>
    <property type="project" value="UniProtKB-UniRule"/>
</dbReference>
<dbReference type="GO" id="GO:0005524">
    <property type="term" value="F:ATP binding"/>
    <property type="evidence" value="ECO:0007669"/>
    <property type="project" value="UniProtKB-UniRule"/>
</dbReference>
<dbReference type="GO" id="GO:0044209">
    <property type="term" value="P:AMP salvage"/>
    <property type="evidence" value="ECO:0007669"/>
    <property type="project" value="UniProtKB-UniRule"/>
</dbReference>
<dbReference type="CDD" id="cd01428">
    <property type="entry name" value="ADK"/>
    <property type="match status" value="1"/>
</dbReference>
<dbReference type="Gene3D" id="3.40.50.300">
    <property type="entry name" value="P-loop containing nucleotide triphosphate hydrolases"/>
    <property type="match status" value="1"/>
</dbReference>
<dbReference type="HAMAP" id="MF_00235">
    <property type="entry name" value="Adenylate_kinase_Adk"/>
    <property type="match status" value="1"/>
</dbReference>
<dbReference type="InterPro" id="IPR000850">
    <property type="entry name" value="Adenylat/UMP-CMP_kin"/>
</dbReference>
<dbReference type="InterPro" id="IPR033690">
    <property type="entry name" value="Adenylat_kinase_CS"/>
</dbReference>
<dbReference type="InterPro" id="IPR027417">
    <property type="entry name" value="P-loop_NTPase"/>
</dbReference>
<dbReference type="NCBIfam" id="NF001381">
    <property type="entry name" value="PRK00279.1-3"/>
    <property type="match status" value="1"/>
</dbReference>
<dbReference type="NCBIfam" id="NF011100">
    <property type="entry name" value="PRK14527.1"/>
    <property type="match status" value="1"/>
</dbReference>
<dbReference type="NCBIfam" id="NF011104">
    <property type="entry name" value="PRK14531.1"/>
    <property type="match status" value="1"/>
</dbReference>
<dbReference type="NCBIfam" id="NF011105">
    <property type="entry name" value="PRK14532.1"/>
    <property type="match status" value="1"/>
</dbReference>
<dbReference type="PANTHER" id="PTHR23359">
    <property type="entry name" value="NUCLEOTIDE KINASE"/>
    <property type="match status" value="1"/>
</dbReference>
<dbReference type="Pfam" id="PF00406">
    <property type="entry name" value="ADK"/>
    <property type="match status" value="1"/>
</dbReference>
<dbReference type="PRINTS" id="PR00094">
    <property type="entry name" value="ADENYLTKNASE"/>
</dbReference>
<dbReference type="SUPFAM" id="SSF52540">
    <property type="entry name" value="P-loop containing nucleoside triphosphate hydrolases"/>
    <property type="match status" value="1"/>
</dbReference>
<dbReference type="PROSITE" id="PS00113">
    <property type="entry name" value="ADENYLATE_KINASE"/>
    <property type="match status" value="1"/>
</dbReference>
<proteinExistence type="inferred from homology"/>
<reference key="1">
    <citation type="journal article" date="2003" name="Nature">
        <title>Genome divergence in two Prochlorococcus ecotypes reflects oceanic niche differentiation.</title>
        <authorList>
            <person name="Rocap G."/>
            <person name="Larimer F.W."/>
            <person name="Lamerdin J.E."/>
            <person name="Malfatti S."/>
            <person name="Chain P."/>
            <person name="Ahlgren N.A."/>
            <person name="Arellano A."/>
            <person name="Coleman M."/>
            <person name="Hauser L."/>
            <person name="Hess W.R."/>
            <person name="Johnson Z.I."/>
            <person name="Land M.L."/>
            <person name="Lindell D."/>
            <person name="Post A.F."/>
            <person name="Regala W."/>
            <person name="Shah M."/>
            <person name="Shaw S.L."/>
            <person name="Steglich C."/>
            <person name="Sullivan M.B."/>
            <person name="Ting C.S."/>
            <person name="Tolonen A."/>
            <person name="Webb E.A."/>
            <person name="Zinser E.R."/>
            <person name="Chisholm S.W."/>
        </authorList>
    </citation>
    <scope>NUCLEOTIDE SEQUENCE [LARGE SCALE GENOMIC DNA]</scope>
    <source>
        <strain>MIT 9313</strain>
    </source>
</reference>
<keyword id="KW-0067">ATP-binding</keyword>
<keyword id="KW-0963">Cytoplasm</keyword>
<keyword id="KW-0418">Kinase</keyword>
<keyword id="KW-0545">Nucleotide biosynthesis</keyword>
<keyword id="KW-0547">Nucleotide-binding</keyword>
<keyword id="KW-1185">Reference proteome</keyword>
<keyword id="KW-0808">Transferase</keyword>
<organism>
    <name type="scientific">Prochlorococcus marinus (strain MIT 9313)</name>
    <dbReference type="NCBI Taxonomy" id="74547"/>
    <lineage>
        <taxon>Bacteria</taxon>
        <taxon>Bacillati</taxon>
        <taxon>Cyanobacteriota</taxon>
        <taxon>Cyanophyceae</taxon>
        <taxon>Synechococcales</taxon>
        <taxon>Prochlorococcaceae</taxon>
        <taxon>Prochlorococcus</taxon>
    </lineage>
</organism>
<evidence type="ECO:0000255" key="1">
    <source>
        <dbReference type="HAMAP-Rule" id="MF_00235"/>
    </source>
</evidence>
<comment type="function">
    <text evidence="1">Catalyzes the reversible transfer of the terminal phosphate group between ATP and AMP. Plays an important role in cellular energy homeostasis and in adenine nucleotide metabolism.</text>
</comment>
<comment type="catalytic activity">
    <reaction evidence="1">
        <text>AMP + ATP = 2 ADP</text>
        <dbReference type="Rhea" id="RHEA:12973"/>
        <dbReference type="ChEBI" id="CHEBI:30616"/>
        <dbReference type="ChEBI" id="CHEBI:456215"/>
        <dbReference type="ChEBI" id="CHEBI:456216"/>
        <dbReference type="EC" id="2.7.4.3"/>
    </reaction>
</comment>
<comment type="pathway">
    <text evidence="1">Purine metabolism; AMP biosynthesis via salvage pathway; AMP from ADP: step 1/1.</text>
</comment>
<comment type="subunit">
    <text evidence="1">Monomer.</text>
</comment>
<comment type="subcellular location">
    <subcellularLocation>
        <location evidence="1">Cytoplasm</location>
    </subcellularLocation>
</comment>
<comment type="domain">
    <text evidence="1">Consists of three domains, a large central CORE domain and two small peripheral domains, NMPbind and LID, which undergo movements during catalysis. The LID domain closes over the site of phosphoryl transfer upon ATP binding. Assembling and dissambling the active center during each catalytic cycle provides an effective means to prevent ATP hydrolysis.</text>
</comment>
<comment type="similarity">
    <text evidence="1">Belongs to the adenylate kinase family.</text>
</comment>
<name>KAD_PROMM</name>
<protein>
    <recommendedName>
        <fullName evidence="1">Adenylate kinase</fullName>
        <shortName evidence="1">AK</shortName>
        <ecNumber evidence="1">2.7.4.3</ecNumber>
    </recommendedName>
    <alternativeName>
        <fullName evidence="1">ATP-AMP transphosphorylase</fullName>
    </alternativeName>
    <alternativeName>
        <fullName evidence="1">ATP:AMP phosphotransferase</fullName>
    </alternativeName>
    <alternativeName>
        <fullName evidence="1">Adenylate monophosphate kinase</fullName>
    </alternativeName>
</protein>
<accession>Q7V526</accession>
<gene>
    <name evidence="1" type="primary">adk</name>
    <name type="ordered locus">PMT_1751</name>
</gene>